<name>LIPA_ANAPZ</name>
<feature type="chain" id="PRO_1000012183" description="Lipoyl synthase">
    <location>
        <begin position="1"/>
        <end position="295"/>
    </location>
</feature>
<feature type="domain" description="Radical SAM core" evidence="2">
    <location>
        <begin position="46"/>
        <end position="262"/>
    </location>
</feature>
<feature type="binding site" evidence="1">
    <location>
        <position position="34"/>
    </location>
    <ligand>
        <name>[4Fe-4S] cluster</name>
        <dbReference type="ChEBI" id="CHEBI:49883"/>
        <label>1</label>
    </ligand>
</feature>
<feature type="binding site" evidence="1">
    <location>
        <position position="39"/>
    </location>
    <ligand>
        <name>[4Fe-4S] cluster</name>
        <dbReference type="ChEBI" id="CHEBI:49883"/>
        <label>1</label>
    </ligand>
</feature>
<feature type="binding site" evidence="1">
    <location>
        <position position="45"/>
    </location>
    <ligand>
        <name>[4Fe-4S] cluster</name>
        <dbReference type="ChEBI" id="CHEBI:49883"/>
        <label>1</label>
    </ligand>
</feature>
<feature type="binding site" evidence="1">
    <location>
        <position position="60"/>
    </location>
    <ligand>
        <name>[4Fe-4S] cluster</name>
        <dbReference type="ChEBI" id="CHEBI:49883"/>
        <label>2</label>
        <note>4Fe-4S-S-AdoMet</note>
    </ligand>
</feature>
<feature type="binding site" evidence="1">
    <location>
        <position position="64"/>
    </location>
    <ligand>
        <name>[4Fe-4S] cluster</name>
        <dbReference type="ChEBI" id="CHEBI:49883"/>
        <label>2</label>
        <note>4Fe-4S-S-AdoMet</note>
    </ligand>
</feature>
<feature type="binding site" evidence="1">
    <location>
        <position position="67"/>
    </location>
    <ligand>
        <name>[4Fe-4S] cluster</name>
        <dbReference type="ChEBI" id="CHEBI:49883"/>
        <label>2</label>
        <note>4Fe-4S-S-AdoMet</note>
    </ligand>
</feature>
<feature type="binding site" evidence="1">
    <location>
        <position position="273"/>
    </location>
    <ligand>
        <name>[4Fe-4S] cluster</name>
        <dbReference type="ChEBI" id="CHEBI:49883"/>
        <label>1</label>
    </ligand>
</feature>
<gene>
    <name evidence="1" type="primary">lipA</name>
    <name type="ordered locus">APH_0367</name>
</gene>
<accession>Q2GKX7</accession>
<dbReference type="EC" id="2.8.1.8" evidence="1"/>
<dbReference type="EMBL" id="CP000235">
    <property type="protein sequence ID" value="ABD44028.1"/>
    <property type="molecule type" value="Genomic_DNA"/>
</dbReference>
<dbReference type="RefSeq" id="WP_011450497.1">
    <property type="nucleotide sequence ID" value="NC_007797.1"/>
</dbReference>
<dbReference type="SMR" id="Q2GKX7"/>
<dbReference type="STRING" id="212042.APH_0367"/>
<dbReference type="PaxDb" id="212042-APH_0367"/>
<dbReference type="EnsemblBacteria" id="ABD44028">
    <property type="protein sequence ID" value="ABD44028"/>
    <property type="gene ID" value="APH_0367"/>
</dbReference>
<dbReference type="GeneID" id="92747450"/>
<dbReference type="KEGG" id="aph:APH_0367"/>
<dbReference type="eggNOG" id="COG0320">
    <property type="taxonomic scope" value="Bacteria"/>
</dbReference>
<dbReference type="HOGENOM" id="CLU_033144_2_1_5"/>
<dbReference type="UniPathway" id="UPA00538">
    <property type="reaction ID" value="UER00593"/>
</dbReference>
<dbReference type="Proteomes" id="UP000001943">
    <property type="component" value="Chromosome"/>
</dbReference>
<dbReference type="GO" id="GO:0005737">
    <property type="term" value="C:cytoplasm"/>
    <property type="evidence" value="ECO:0007669"/>
    <property type="project" value="UniProtKB-SubCell"/>
</dbReference>
<dbReference type="GO" id="GO:0051539">
    <property type="term" value="F:4 iron, 4 sulfur cluster binding"/>
    <property type="evidence" value="ECO:0007669"/>
    <property type="project" value="UniProtKB-UniRule"/>
</dbReference>
<dbReference type="GO" id="GO:0016992">
    <property type="term" value="F:lipoate synthase activity"/>
    <property type="evidence" value="ECO:0007669"/>
    <property type="project" value="UniProtKB-UniRule"/>
</dbReference>
<dbReference type="GO" id="GO:0046872">
    <property type="term" value="F:metal ion binding"/>
    <property type="evidence" value="ECO:0007669"/>
    <property type="project" value="UniProtKB-KW"/>
</dbReference>
<dbReference type="CDD" id="cd01335">
    <property type="entry name" value="Radical_SAM"/>
    <property type="match status" value="1"/>
</dbReference>
<dbReference type="FunFam" id="3.20.20.70:FF:000040">
    <property type="entry name" value="Lipoyl synthase"/>
    <property type="match status" value="1"/>
</dbReference>
<dbReference type="Gene3D" id="3.20.20.70">
    <property type="entry name" value="Aldolase class I"/>
    <property type="match status" value="1"/>
</dbReference>
<dbReference type="HAMAP" id="MF_00206">
    <property type="entry name" value="Lipoyl_synth"/>
    <property type="match status" value="1"/>
</dbReference>
<dbReference type="InterPro" id="IPR013785">
    <property type="entry name" value="Aldolase_TIM"/>
</dbReference>
<dbReference type="InterPro" id="IPR006638">
    <property type="entry name" value="Elp3/MiaA/NifB-like_rSAM"/>
</dbReference>
<dbReference type="InterPro" id="IPR003698">
    <property type="entry name" value="Lipoyl_synth"/>
</dbReference>
<dbReference type="InterPro" id="IPR007197">
    <property type="entry name" value="rSAM"/>
</dbReference>
<dbReference type="NCBIfam" id="TIGR00510">
    <property type="entry name" value="lipA"/>
    <property type="match status" value="1"/>
</dbReference>
<dbReference type="NCBIfam" id="NF004019">
    <property type="entry name" value="PRK05481.1"/>
    <property type="match status" value="1"/>
</dbReference>
<dbReference type="NCBIfam" id="NF009544">
    <property type="entry name" value="PRK12928.1"/>
    <property type="match status" value="1"/>
</dbReference>
<dbReference type="PANTHER" id="PTHR10949">
    <property type="entry name" value="LIPOYL SYNTHASE"/>
    <property type="match status" value="1"/>
</dbReference>
<dbReference type="PANTHER" id="PTHR10949:SF0">
    <property type="entry name" value="LIPOYL SYNTHASE, MITOCHONDRIAL"/>
    <property type="match status" value="1"/>
</dbReference>
<dbReference type="Pfam" id="PF04055">
    <property type="entry name" value="Radical_SAM"/>
    <property type="match status" value="1"/>
</dbReference>
<dbReference type="PIRSF" id="PIRSF005963">
    <property type="entry name" value="Lipoyl_synth"/>
    <property type="match status" value="1"/>
</dbReference>
<dbReference type="SFLD" id="SFLDF00271">
    <property type="entry name" value="lipoyl_synthase"/>
    <property type="match status" value="1"/>
</dbReference>
<dbReference type="SFLD" id="SFLDG01058">
    <property type="entry name" value="lipoyl_synthase_like"/>
    <property type="match status" value="1"/>
</dbReference>
<dbReference type="SMART" id="SM00729">
    <property type="entry name" value="Elp3"/>
    <property type="match status" value="1"/>
</dbReference>
<dbReference type="SUPFAM" id="SSF102114">
    <property type="entry name" value="Radical SAM enzymes"/>
    <property type="match status" value="1"/>
</dbReference>
<dbReference type="PROSITE" id="PS51918">
    <property type="entry name" value="RADICAL_SAM"/>
    <property type="match status" value="1"/>
</dbReference>
<sequence>MNSKPSWLRVKMPGGEVFEEVRDLVKRQRLNTVCEEAACPNIGECWNKRHATIMVMGDVCTRACAFCNVKTGVPRALDLGEPERVGEAISKLGLKHVVITSVDRDDLPDGGASHFAKCIREIRKRDPNVTIEILTPDFQGKPGAVDVIASARPDVYNHNLETVPRLYARVRPRAKYFNSLQLLQQVKDKTQGVFTKSGLMLGLGEQKEEVYQVMDDLRCAGVDFLVLGQYLQPTKDNIDVDRYVTPEEFEQYKRMAYAKGFSMVASSPLARSSYHAEDDFLRLRALRTARMRVAT</sequence>
<comment type="function">
    <text evidence="1">Catalyzes the radical-mediated insertion of two sulfur atoms into the C-6 and C-8 positions of the octanoyl moiety bound to the lipoyl domains of lipoate-dependent enzymes, thereby converting the octanoylated domains into lipoylated derivatives.</text>
</comment>
<comment type="catalytic activity">
    <reaction evidence="1">
        <text>[[Fe-S] cluster scaffold protein carrying a second [4Fe-4S](2+) cluster] + N(6)-octanoyl-L-lysyl-[protein] + 2 oxidized [2Fe-2S]-[ferredoxin] + 2 S-adenosyl-L-methionine + 4 H(+) = [[Fe-S] cluster scaffold protein] + N(6)-[(R)-dihydrolipoyl]-L-lysyl-[protein] + 4 Fe(3+) + 2 hydrogen sulfide + 2 5'-deoxyadenosine + 2 L-methionine + 2 reduced [2Fe-2S]-[ferredoxin]</text>
        <dbReference type="Rhea" id="RHEA:16585"/>
        <dbReference type="Rhea" id="RHEA-COMP:9928"/>
        <dbReference type="Rhea" id="RHEA-COMP:10000"/>
        <dbReference type="Rhea" id="RHEA-COMP:10001"/>
        <dbReference type="Rhea" id="RHEA-COMP:10475"/>
        <dbReference type="Rhea" id="RHEA-COMP:14568"/>
        <dbReference type="Rhea" id="RHEA-COMP:14569"/>
        <dbReference type="ChEBI" id="CHEBI:15378"/>
        <dbReference type="ChEBI" id="CHEBI:17319"/>
        <dbReference type="ChEBI" id="CHEBI:29034"/>
        <dbReference type="ChEBI" id="CHEBI:29919"/>
        <dbReference type="ChEBI" id="CHEBI:33722"/>
        <dbReference type="ChEBI" id="CHEBI:33737"/>
        <dbReference type="ChEBI" id="CHEBI:33738"/>
        <dbReference type="ChEBI" id="CHEBI:57844"/>
        <dbReference type="ChEBI" id="CHEBI:59789"/>
        <dbReference type="ChEBI" id="CHEBI:78809"/>
        <dbReference type="ChEBI" id="CHEBI:83100"/>
        <dbReference type="EC" id="2.8.1.8"/>
    </reaction>
</comment>
<comment type="cofactor">
    <cofactor evidence="1">
        <name>[4Fe-4S] cluster</name>
        <dbReference type="ChEBI" id="CHEBI:49883"/>
    </cofactor>
    <text evidence="1">Binds 2 [4Fe-4S] clusters per subunit. One cluster is coordinated with 3 cysteines and an exchangeable S-adenosyl-L-methionine.</text>
</comment>
<comment type="pathway">
    <text evidence="1">Protein modification; protein lipoylation via endogenous pathway; protein N(6)-(lipoyl)lysine from octanoyl-[acyl-carrier-protein]: step 2/2.</text>
</comment>
<comment type="subcellular location">
    <subcellularLocation>
        <location evidence="1">Cytoplasm</location>
    </subcellularLocation>
</comment>
<comment type="similarity">
    <text evidence="1">Belongs to the radical SAM superfamily. Lipoyl synthase family.</text>
</comment>
<reference key="1">
    <citation type="journal article" date="2006" name="PLoS Genet.">
        <title>Comparative genomics of emerging human ehrlichiosis agents.</title>
        <authorList>
            <person name="Dunning Hotopp J.C."/>
            <person name="Lin M."/>
            <person name="Madupu R."/>
            <person name="Crabtree J."/>
            <person name="Angiuoli S.V."/>
            <person name="Eisen J.A."/>
            <person name="Seshadri R."/>
            <person name="Ren Q."/>
            <person name="Wu M."/>
            <person name="Utterback T.R."/>
            <person name="Smith S."/>
            <person name="Lewis M."/>
            <person name="Khouri H."/>
            <person name="Zhang C."/>
            <person name="Niu H."/>
            <person name="Lin Q."/>
            <person name="Ohashi N."/>
            <person name="Zhi N."/>
            <person name="Nelson W.C."/>
            <person name="Brinkac L.M."/>
            <person name="Dodson R.J."/>
            <person name="Rosovitz M.J."/>
            <person name="Sundaram J.P."/>
            <person name="Daugherty S.C."/>
            <person name="Davidsen T."/>
            <person name="Durkin A.S."/>
            <person name="Gwinn M.L."/>
            <person name="Haft D.H."/>
            <person name="Selengut J.D."/>
            <person name="Sullivan S.A."/>
            <person name="Zafar N."/>
            <person name="Zhou L."/>
            <person name="Benahmed F."/>
            <person name="Forberger H."/>
            <person name="Halpin R."/>
            <person name="Mulligan S."/>
            <person name="Robinson J."/>
            <person name="White O."/>
            <person name="Rikihisa Y."/>
            <person name="Tettelin H."/>
        </authorList>
    </citation>
    <scope>NUCLEOTIDE SEQUENCE [LARGE SCALE GENOMIC DNA]</scope>
    <source>
        <strain>HZ</strain>
    </source>
</reference>
<protein>
    <recommendedName>
        <fullName evidence="1">Lipoyl synthase</fullName>
        <ecNumber evidence="1">2.8.1.8</ecNumber>
    </recommendedName>
    <alternativeName>
        <fullName evidence="1">Lip-syn</fullName>
        <shortName evidence="1">LS</shortName>
    </alternativeName>
    <alternativeName>
        <fullName evidence="1">Lipoate synthase</fullName>
    </alternativeName>
    <alternativeName>
        <fullName evidence="1">Lipoic acid synthase</fullName>
    </alternativeName>
    <alternativeName>
        <fullName evidence="1">Sulfur insertion protein LipA</fullName>
    </alternativeName>
</protein>
<evidence type="ECO:0000255" key="1">
    <source>
        <dbReference type="HAMAP-Rule" id="MF_00206"/>
    </source>
</evidence>
<evidence type="ECO:0000255" key="2">
    <source>
        <dbReference type="PROSITE-ProRule" id="PRU01266"/>
    </source>
</evidence>
<keyword id="KW-0004">4Fe-4S</keyword>
<keyword id="KW-0963">Cytoplasm</keyword>
<keyword id="KW-0408">Iron</keyword>
<keyword id="KW-0411">Iron-sulfur</keyword>
<keyword id="KW-0479">Metal-binding</keyword>
<keyword id="KW-0949">S-adenosyl-L-methionine</keyword>
<keyword id="KW-0808">Transferase</keyword>
<organism>
    <name type="scientific">Anaplasma phagocytophilum (strain HZ)</name>
    <dbReference type="NCBI Taxonomy" id="212042"/>
    <lineage>
        <taxon>Bacteria</taxon>
        <taxon>Pseudomonadati</taxon>
        <taxon>Pseudomonadota</taxon>
        <taxon>Alphaproteobacteria</taxon>
        <taxon>Rickettsiales</taxon>
        <taxon>Anaplasmataceae</taxon>
        <taxon>Anaplasma</taxon>
        <taxon>phagocytophilum group</taxon>
    </lineage>
</organism>
<proteinExistence type="inferred from homology"/>